<comment type="function">
    <text evidence="1">One of the primary rRNA binding proteins, it binds specifically to the 5'-end of 16S ribosomal RNA.</text>
</comment>
<comment type="subunit">
    <text evidence="1">Part of the 30S ribosomal subunit.</text>
</comment>
<comment type="similarity">
    <text evidence="1">Belongs to the universal ribosomal protein uS17 family.</text>
</comment>
<keyword id="KW-0687">Ribonucleoprotein</keyword>
<keyword id="KW-0689">Ribosomal protein</keyword>
<keyword id="KW-0694">RNA-binding</keyword>
<keyword id="KW-0699">rRNA-binding</keyword>
<evidence type="ECO:0000255" key="1">
    <source>
        <dbReference type="HAMAP-Rule" id="MF_01345"/>
    </source>
</evidence>
<evidence type="ECO:0000305" key="2"/>
<organism>
    <name type="scientific">Vibrio cholerae serotype O1 (strain M66-2)</name>
    <dbReference type="NCBI Taxonomy" id="579112"/>
    <lineage>
        <taxon>Bacteria</taxon>
        <taxon>Pseudomonadati</taxon>
        <taxon>Pseudomonadota</taxon>
        <taxon>Gammaproteobacteria</taxon>
        <taxon>Vibrionales</taxon>
        <taxon>Vibrionaceae</taxon>
        <taxon>Vibrio</taxon>
    </lineage>
</organism>
<reference key="1">
    <citation type="journal article" date="2008" name="PLoS ONE">
        <title>A recalibrated molecular clock and independent origins for the cholera pandemic clones.</title>
        <authorList>
            <person name="Feng L."/>
            <person name="Reeves P.R."/>
            <person name="Lan R."/>
            <person name="Ren Y."/>
            <person name="Gao C."/>
            <person name="Zhou Z."/>
            <person name="Ren Y."/>
            <person name="Cheng J."/>
            <person name="Wang W."/>
            <person name="Wang J."/>
            <person name="Qian W."/>
            <person name="Li D."/>
            <person name="Wang L."/>
        </authorList>
    </citation>
    <scope>NUCLEOTIDE SEQUENCE [LARGE SCALE GENOMIC DNA]</scope>
    <source>
        <strain>M66-2</strain>
    </source>
</reference>
<accession>C3LRP9</accession>
<sequence>MSDKIRTQLGRVVSDKMDKSIVVAIERMVKHPIYGKFVKRTTKVHAHDENNECGIGDTVEIRECRPLSKTKSWTLVKIVEKAKM</sequence>
<name>RS17_VIBCM</name>
<protein>
    <recommendedName>
        <fullName evidence="1">Small ribosomal subunit protein uS17</fullName>
    </recommendedName>
    <alternativeName>
        <fullName evidence="2">30S ribosomal protein S17</fullName>
    </alternativeName>
</protein>
<gene>
    <name evidence="1" type="primary">rpsQ</name>
    <name type="ordered locus">VCM66_2507</name>
</gene>
<feature type="chain" id="PRO_1000166506" description="Small ribosomal subunit protein uS17">
    <location>
        <begin position="1"/>
        <end position="84"/>
    </location>
</feature>
<dbReference type="EMBL" id="CP001233">
    <property type="protein sequence ID" value="ACP06804.1"/>
    <property type="molecule type" value="Genomic_DNA"/>
</dbReference>
<dbReference type="RefSeq" id="WP_001280803.1">
    <property type="nucleotide sequence ID" value="NC_012578.1"/>
</dbReference>
<dbReference type="SMR" id="C3LRP9"/>
<dbReference type="GeneID" id="69718809"/>
<dbReference type="KEGG" id="vcm:VCM66_2507"/>
<dbReference type="HOGENOM" id="CLU_073626_1_1_6"/>
<dbReference type="Proteomes" id="UP000001217">
    <property type="component" value="Chromosome I"/>
</dbReference>
<dbReference type="GO" id="GO:0022627">
    <property type="term" value="C:cytosolic small ribosomal subunit"/>
    <property type="evidence" value="ECO:0007669"/>
    <property type="project" value="TreeGrafter"/>
</dbReference>
<dbReference type="GO" id="GO:0019843">
    <property type="term" value="F:rRNA binding"/>
    <property type="evidence" value="ECO:0007669"/>
    <property type="project" value="UniProtKB-UniRule"/>
</dbReference>
<dbReference type="GO" id="GO:0003735">
    <property type="term" value="F:structural constituent of ribosome"/>
    <property type="evidence" value="ECO:0007669"/>
    <property type="project" value="InterPro"/>
</dbReference>
<dbReference type="GO" id="GO:0006412">
    <property type="term" value="P:translation"/>
    <property type="evidence" value="ECO:0007669"/>
    <property type="project" value="UniProtKB-UniRule"/>
</dbReference>
<dbReference type="CDD" id="cd00364">
    <property type="entry name" value="Ribosomal_uS17"/>
    <property type="match status" value="1"/>
</dbReference>
<dbReference type="FunFam" id="2.40.50.140:FF:000014">
    <property type="entry name" value="30S ribosomal protein S17"/>
    <property type="match status" value="1"/>
</dbReference>
<dbReference type="Gene3D" id="2.40.50.140">
    <property type="entry name" value="Nucleic acid-binding proteins"/>
    <property type="match status" value="1"/>
</dbReference>
<dbReference type="HAMAP" id="MF_01345_B">
    <property type="entry name" value="Ribosomal_uS17_B"/>
    <property type="match status" value="1"/>
</dbReference>
<dbReference type="InterPro" id="IPR012340">
    <property type="entry name" value="NA-bd_OB-fold"/>
</dbReference>
<dbReference type="InterPro" id="IPR000266">
    <property type="entry name" value="Ribosomal_uS17"/>
</dbReference>
<dbReference type="InterPro" id="IPR019984">
    <property type="entry name" value="Ribosomal_uS17_bact/chlr"/>
</dbReference>
<dbReference type="InterPro" id="IPR019979">
    <property type="entry name" value="Ribosomal_uS17_CS"/>
</dbReference>
<dbReference type="NCBIfam" id="NF004123">
    <property type="entry name" value="PRK05610.1"/>
    <property type="match status" value="1"/>
</dbReference>
<dbReference type="NCBIfam" id="TIGR03635">
    <property type="entry name" value="uS17_bact"/>
    <property type="match status" value="1"/>
</dbReference>
<dbReference type="PANTHER" id="PTHR10744">
    <property type="entry name" value="40S RIBOSOMAL PROTEIN S11 FAMILY MEMBER"/>
    <property type="match status" value="1"/>
</dbReference>
<dbReference type="PANTHER" id="PTHR10744:SF1">
    <property type="entry name" value="SMALL RIBOSOMAL SUBUNIT PROTEIN US17M"/>
    <property type="match status" value="1"/>
</dbReference>
<dbReference type="Pfam" id="PF00366">
    <property type="entry name" value="Ribosomal_S17"/>
    <property type="match status" value="1"/>
</dbReference>
<dbReference type="PRINTS" id="PR00973">
    <property type="entry name" value="RIBOSOMALS17"/>
</dbReference>
<dbReference type="SUPFAM" id="SSF50249">
    <property type="entry name" value="Nucleic acid-binding proteins"/>
    <property type="match status" value="1"/>
</dbReference>
<dbReference type="PROSITE" id="PS00056">
    <property type="entry name" value="RIBOSOMAL_S17"/>
    <property type="match status" value="1"/>
</dbReference>
<proteinExistence type="inferred from homology"/>